<sequence>MSLLTEVETYVLSIIPSGPLKAEIAQRLEDVFAGKNTDLEALMEWLKTRPILSPLTKGILGFVFTLTVPSERGLQRRRFVQNALNGNGDPNNMDRAVKLYRKLKREITFHGAKEIALSYSAGALASCMGLIYNRMGAVTTEVAFGLVCATCEQIADSQHRSHRQMVITTNPLIRHENRMVLASTTAKAMEQMAGSSEQAAEAMEVASQARQMVQAMRAIGTHPSSSAGLKSDLLENLQAYQKRMGVQMQRFK</sequence>
<keyword id="KW-0025">Alternative splicing</keyword>
<keyword id="KW-1048">Host nucleus</keyword>
<keyword id="KW-0472">Membrane</keyword>
<keyword id="KW-0694">RNA-binding</keyword>
<keyword id="KW-0468">Viral matrix protein</keyword>
<keyword id="KW-0946">Virion</keyword>
<organismHost>
    <name type="scientific">Aves</name>
    <dbReference type="NCBI Taxonomy" id="8782"/>
</organismHost>
<organismHost>
    <name type="scientific">Homo sapiens</name>
    <name type="common">Human</name>
    <dbReference type="NCBI Taxonomy" id="9606"/>
</organismHost>
<comment type="function">
    <text evidence="1">Plays critical roles in virus replication, from virus entry and uncoating to assembly and budding of the virus particle. M1 binding to ribonucleocapsids (RNPs) in nucleus seems to inhibit viral transcription. Interaction of viral NEP with M1-RNP is thought to promote nuclear export of the complex, which is targeted to the virion assembly site at the apical plasma membrane in polarized epithelial cells. Interactions with NA and HA may bring M1, a non-raft-associated protein, into lipid rafts. Forms a continuous shell on the inner side of the lipid bilayer in virion, where it binds the RNP. During virus entry into cell, the M2 ion channel acidifies the internal virion core, inducing M1 dissociation from the RNP. M1-free RNPs are transported to the nucleus, where viral transcription and replication can take place.</text>
</comment>
<comment type="function">
    <text evidence="1">Determines the virion's shape: spherical or filamentous. Clinical isolates of influenza are characterized by the presence of significant proportion of filamentous virions, whereas after multiple passage on eggs or cell culture, virions have only spherical morphology. Filamentous virions are thought to be important to infect neighboring cells, and spherical virions more suited to spread through aerosol between hosts organisms.</text>
</comment>
<comment type="subunit">
    <text evidence="1">Homodimer and homomultimer. Interacts with NEP. Binds ribonucleocapsid by both interacting with genomic RNA and NP protein. May interact with HA and NA. Cannot bind NP without genomic RNA.</text>
</comment>
<comment type="subcellular location">
    <subcellularLocation>
        <location evidence="1">Virion membrane</location>
        <topology evidence="1">Peripheral membrane protein</topology>
        <orientation evidence="1">Cytoplasmic side</orientation>
    </subcellularLocation>
    <subcellularLocation>
        <location evidence="1">Host nucleus</location>
    </subcellularLocation>
</comment>
<comment type="alternative products">
    <event type="alternative splicing"/>
    <isoform>
        <id>P26127-1</id>
        <name>M1</name>
        <sequence type="displayed"/>
    </isoform>
    <isoform>
        <id>P26129-1</id>
        <name>M2</name>
        <sequence type="external"/>
    </isoform>
    <text>Only the first 9 residues are shared by the 2 isoforms.</text>
</comment>
<comment type="miscellaneous">
    <text evidence="1">Most abundant protein in virion. When expressed alone can form virus-like particles in transfected cells.</text>
</comment>
<comment type="similarity">
    <text evidence="1">Belongs to the influenza viruses Matrix protein M1 family.</text>
</comment>
<proteinExistence type="inferred from homology"/>
<feature type="chain" id="PRO_0000078857" description="Matrix protein 1">
    <location>
        <begin position="1"/>
        <end position="252"/>
    </location>
</feature>
<feature type="region of interest" description="Membrane-binding" evidence="1">
    <location>
        <begin position="1"/>
        <end position="164"/>
    </location>
</feature>
<feature type="region of interest" description="RNP-binding" evidence="1">
    <location>
        <begin position="165"/>
        <end position="252"/>
    </location>
</feature>
<feature type="short sequence motif" description="Nuclear localization signal" evidence="1">
    <location>
        <begin position="101"/>
        <end position="105"/>
    </location>
</feature>
<name>M1_I57A1</name>
<protein>
    <recommendedName>
        <fullName evidence="1">Matrix protein 1</fullName>
        <shortName evidence="1">M1</shortName>
    </recommendedName>
</protein>
<gene>
    <name evidence="1" type="primary">M</name>
</gene>
<evidence type="ECO:0000255" key="1">
    <source>
        <dbReference type="HAMAP-Rule" id="MF_04068"/>
    </source>
</evidence>
<organism>
    <name type="scientific">Influenza A virus (strain A/Leningrad/134/1957 H2N2)</name>
    <dbReference type="NCBI Taxonomy" id="387163"/>
    <lineage>
        <taxon>Viruses</taxon>
        <taxon>Riboviria</taxon>
        <taxon>Orthornavirae</taxon>
        <taxon>Negarnaviricota</taxon>
        <taxon>Polyploviricotina</taxon>
        <taxon>Insthoviricetes</taxon>
        <taxon>Articulavirales</taxon>
        <taxon>Orthomyxoviridae</taxon>
        <taxon>Alphainfluenzavirus</taxon>
        <taxon>Alphainfluenzavirus influenzae</taxon>
        <taxon>Influenza A virus</taxon>
    </lineage>
</organism>
<reference key="1">
    <citation type="journal article" date="1992" name="Virology">
        <title>Sequence changes in the live attenuated, cold-adapted variants of influenza A/Leningrad/134/57 (H2N2) virus.</title>
        <authorList>
            <person name="Klimov A.I."/>
            <person name="Cox N.J."/>
            <person name="Yotov W.V."/>
            <person name="Rocha E."/>
            <person name="Alexandrova G.I."/>
            <person name="Kendal A.P."/>
        </authorList>
    </citation>
    <scope>NUCLEOTIDE SEQUENCE</scope>
</reference>
<dbReference type="EMBL" id="M81570">
    <property type="protein sequence ID" value="AAA19193.1"/>
    <property type="molecule type" value="Unassigned_DNA"/>
</dbReference>
<dbReference type="SMR" id="P26127"/>
<dbReference type="GO" id="GO:0042025">
    <property type="term" value="C:host cell nucleus"/>
    <property type="evidence" value="ECO:0007669"/>
    <property type="project" value="UniProtKB-SubCell"/>
</dbReference>
<dbReference type="GO" id="GO:0016020">
    <property type="term" value="C:membrane"/>
    <property type="evidence" value="ECO:0007669"/>
    <property type="project" value="UniProtKB-KW"/>
</dbReference>
<dbReference type="GO" id="GO:0055036">
    <property type="term" value="C:virion membrane"/>
    <property type="evidence" value="ECO:0007669"/>
    <property type="project" value="UniProtKB-SubCell"/>
</dbReference>
<dbReference type="GO" id="GO:0003723">
    <property type="term" value="F:RNA binding"/>
    <property type="evidence" value="ECO:0007669"/>
    <property type="project" value="UniProtKB-UniRule"/>
</dbReference>
<dbReference type="GO" id="GO:0039660">
    <property type="term" value="F:structural constituent of virion"/>
    <property type="evidence" value="ECO:0007669"/>
    <property type="project" value="UniProtKB-UniRule"/>
</dbReference>
<dbReference type="GO" id="GO:0046761">
    <property type="term" value="P:viral budding from plasma membrane"/>
    <property type="evidence" value="ECO:0007669"/>
    <property type="project" value="UniProtKB-UniRule"/>
</dbReference>
<dbReference type="FunFam" id="1.10.10.180:FF:000001">
    <property type="entry name" value="Matrix protein 1"/>
    <property type="match status" value="1"/>
</dbReference>
<dbReference type="FunFam" id="1.20.91.10:FF:000001">
    <property type="entry name" value="Matrix protein 1"/>
    <property type="match status" value="1"/>
</dbReference>
<dbReference type="Gene3D" id="1.10.10.180">
    <property type="match status" value="1"/>
</dbReference>
<dbReference type="Gene3D" id="1.20.91.10">
    <property type="match status" value="1"/>
</dbReference>
<dbReference type="HAMAP" id="MF_04068">
    <property type="entry name" value="INFV_M1"/>
    <property type="match status" value="1"/>
</dbReference>
<dbReference type="InterPro" id="IPR036039">
    <property type="entry name" value="Flu_matrix_M1"/>
</dbReference>
<dbReference type="InterPro" id="IPR013188">
    <property type="entry name" value="Flu_matrix_M1_C"/>
</dbReference>
<dbReference type="InterPro" id="IPR001561">
    <property type="entry name" value="Flu_matrix_M1_N"/>
</dbReference>
<dbReference type="InterPro" id="IPR015423">
    <property type="entry name" value="Flu_matrix_M1_N_sub1"/>
</dbReference>
<dbReference type="InterPro" id="IPR015799">
    <property type="entry name" value="Flu_matrix_M1_N_sub2"/>
</dbReference>
<dbReference type="InterPro" id="IPR037533">
    <property type="entry name" value="INFV_M1"/>
</dbReference>
<dbReference type="Pfam" id="PF00598">
    <property type="entry name" value="Flu_M1"/>
    <property type="match status" value="1"/>
</dbReference>
<dbReference type="Pfam" id="PF08289">
    <property type="entry name" value="Flu_M1_C"/>
    <property type="match status" value="1"/>
</dbReference>
<dbReference type="SMART" id="SM00759">
    <property type="entry name" value="Flu_M1_C"/>
    <property type="match status" value="1"/>
</dbReference>
<dbReference type="SUPFAM" id="SSF48145">
    <property type="entry name" value="Influenza virus matrix protein M1"/>
    <property type="match status" value="1"/>
</dbReference>
<accession>P26127</accession>